<feature type="chain" id="PRO_0000255137" description="Cytochrome b">
    <location>
        <begin position="1"/>
        <end position="379"/>
    </location>
</feature>
<feature type="transmembrane region" description="Helical" evidence="2">
    <location>
        <begin position="33"/>
        <end position="53"/>
    </location>
</feature>
<feature type="transmembrane region" description="Helical" evidence="2">
    <location>
        <begin position="77"/>
        <end position="98"/>
    </location>
</feature>
<feature type="transmembrane region" description="Helical" evidence="2">
    <location>
        <begin position="113"/>
        <end position="133"/>
    </location>
</feature>
<feature type="transmembrane region" description="Helical" evidence="2">
    <location>
        <begin position="178"/>
        <end position="198"/>
    </location>
</feature>
<feature type="transmembrane region" description="Helical" evidence="2">
    <location>
        <begin position="226"/>
        <end position="246"/>
    </location>
</feature>
<feature type="transmembrane region" description="Helical" evidence="2">
    <location>
        <begin position="288"/>
        <end position="308"/>
    </location>
</feature>
<feature type="transmembrane region" description="Helical" evidence="2">
    <location>
        <begin position="320"/>
        <end position="340"/>
    </location>
</feature>
<feature type="transmembrane region" description="Helical" evidence="2">
    <location>
        <begin position="347"/>
        <end position="367"/>
    </location>
</feature>
<feature type="binding site" description="axial binding residue" evidence="2">
    <location>
        <position position="83"/>
    </location>
    <ligand>
        <name>heme b</name>
        <dbReference type="ChEBI" id="CHEBI:60344"/>
        <label>b562</label>
    </ligand>
    <ligandPart>
        <name>Fe</name>
        <dbReference type="ChEBI" id="CHEBI:18248"/>
    </ligandPart>
</feature>
<feature type="binding site" description="axial binding residue" evidence="2">
    <location>
        <position position="97"/>
    </location>
    <ligand>
        <name>heme b</name>
        <dbReference type="ChEBI" id="CHEBI:60344"/>
        <label>b566</label>
    </ligand>
    <ligandPart>
        <name>Fe</name>
        <dbReference type="ChEBI" id="CHEBI:18248"/>
    </ligandPart>
</feature>
<feature type="binding site" description="axial binding residue" evidence="2">
    <location>
        <position position="182"/>
    </location>
    <ligand>
        <name>heme b</name>
        <dbReference type="ChEBI" id="CHEBI:60344"/>
        <label>b562</label>
    </ligand>
    <ligandPart>
        <name>Fe</name>
        <dbReference type="ChEBI" id="CHEBI:18248"/>
    </ligandPart>
</feature>
<feature type="binding site" description="axial binding residue" evidence="2">
    <location>
        <position position="196"/>
    </location>
    <ligand>
        <name>heme b</name>
        <dbReference type="ChEBI" id="CHEBI:60344"/>
        <label>b566</label>
    </ligand>
    <ligandPart>
        <name>Fe</name>
        <dbReference type="ChEBI" id="CHEBI:18248"/>
    </ligandPart>
</feature>
<feature type="binding site" evidence="2">
    <location>
        <position position="201"/>
    </location>
    <ligand>
        <name>a ubiquinone</name>
        <dbReference type="ChEBI" id="CHEBI:16389"/>
    </ligand>
</feature>
<keyword id="KW-0249">Electron transport</keyword>
<keyword id="KW-0349">Heme</keyword>
<keyword id="KW-0408">Iron</keyword>
<keyword id="KW-0472">Membrane</keyword>
<keyword id="KW-0479">Metal-binding</keyword>
<keyword id="KW-0496">Mitochondrion</keyword>
<keyword id="KW-0999">Mitochondrion inner membrane</keyword>
<keyword id="KW-0679">Respiratory chain</keyword>
<keyword id="KW-0812">Transmembrane</keyword>
<keyword id="KW-1133">Transmembrane helix</keyword>
<keyword id="KW-0813">Transport</keyword>
<keyword id="KW-0830">Ubiquinone</keyword>
<evidence type="ECO:0000250" key="1"/>
<evidence type="ECO:0000250" key="2">
    <source>
        <dbReference type="UniProtKB" id="P00157"/>
    </source>
</evidence>
<evidence type="ECO:0000255" key="3">
    <source>
        <dbReference type="PROSITE-ProRule" id="PRU00967"/>
    </source>
</evidence>
<evidence type="ECO:0000255" key="4">
    <source>
        <dbReference type="PROSITE-ProRule" id="PRU00968"/>
    </source>
</evidence>
<sequence>MTNTRKTHPLIKIINHSFIDLPAPSNISAWWNFGSLLGLCLIIQILTGLFLAMHYTSDTMTAFSSVTHICRDVNYGWLIRYMHANGASMFFICLFLHVGRGMYYGSYTYFETWNIGVILLFAVMATAFMGYVLPWGQMSFWGATVITNLLSAIPYIGTTLVEWIWGGFSVDKATLTRFFAFHFILPFIIAALVMVHLLFLHETGSNNPSGLISDSDKIPFHPYYTIKDILGVLLLVLTLMALVLFSPDLLGDPDNYTPANPLSTPPHIKPEWYFLFAYAILRSIPNKLGGVLALVFSILILMLFPLLHLSKQRSMMFRPLSQCVFWILVADLFTLTWIGGQPVEHPFIIIGQLASILYFAIILLILPTVSMIENKLLKW</sequence>
<dbReference type="EMBL" id="AF157908">
    <property type="protein sequence ID" value="AAD50192.1"/>
    <property type="molecule type" value="Genomic_DNA"/>
</dbReference>
<dbReference type="EMBL" id="AF157913">
    <property type="protein sequence ID" value="AAD50197.1"/>
    <property type="molecule type" value="Genomic_DNA"/>
</dbReference>
<dbReference type="SMR" id="Q9TF45"/>
<dbReference type="GO" id="GO:0005743">
    <property type="term" value="C:mitochondrial inner membrane"/>
    <property type="evidence" value="ECO:0007669"/>
    <property type="project" value="UniProtKB-SubCell"/>
</dbReference>
<dbReference type="GO" id="GO:0045275">
    <property type="term" value="C:respiratory chain complex III"/>
    <property type="evidence" value="ECO:0007669"/>
    <property type="project" value="InterPro"/>
</dbReference>
<dbReference type="GO" id="GO:0046872">
    <property type="term" value="F:metal ion binding"/>
    <property type="evidence" value="ECO:0007669"/>
    <property type="project" value="UniProtKB-KW"/>
</dbReference>
<dbReference type="GO" id="GO:0008121">
    <property type="term" value="F:ubiquinol-cytochrome-c reductase activity"/>
    <property type="evidence" value="ECO:0007669"/>
    <property type="project" value="InterPro"/>
</dbReference>
<dbReference type="GO" id="GO:0006122">
    <property type="term" value="P:mitochondrial electron transport, ubiquinol to cytochrome c"/>
    <property type="evidence" value="ECO:0007669"/>
    <property type="project" value="TreeGrafter"/>
</dbReference>
<dbReference type="CDD" id="cd00290">
    <property type="entry name" value="cytochrome_b_C"/>
    <property type="match status" value="1"/>
</dbReference>
<dbReference type="CDD" id="cd00284">
    <property type="entry name" value="Cytochrome_b_N"/>
    <property type="match status" value="1"/>
</dbReference>
<dbReference type="FunFam" id="1.20.810.10:FF:000002">
    <property type="entry name" value="Cytochrome b"/>
    <property type="match status" value="1"/>
</dbReference>
<dbReference type="Gene3D" id="1.20.810.10">
    <property type="entry name" value="Cytochrome Bc1 Complex, Chain C"/>
    <property type="match status" value="1"/>
</dbReference>
<dbReference type="InterPro" id="IPR005798">
    <property type="entry name" value="Cyt_b/b6_C"/>
</dbReference>
<dbReference type="InterPro" id="IPR036150">
    <property type="entry name" value="Cyt_b/b6_C_sf"/>
</dbReference>
<dbReference type="InterPro" id="IPR005797">
    <property type="entry name" value="Cyt_b/b6_N"/>
</dbReference>
<dbReference type="InterPro" id="IPR027387">
    <property type="entry name" value="Cytb/b6-like_sf"/>
</dbReference>
<dbReference type="InterPro" id="IPR030689">
    <property type="entry name" value="Cytochrome_b"/>
</dbReference>
<dbReference type="InterPro" id="IPR048260">
    <property type="entry name" value="Cytochrome_b_C_euk/bac"/>
</dbReference>
<dbReference type="InterPro" id="IPR048259">
    <property type="entry name" value="Cytochrome_b_N_euk/bac"/>
</dbReference>
<dbReference type="InterPro" id="IPR016174">
    <property type="entry name" value="Di-haem_cyt_TM"/>
</dbReference>
<dbReference type="PANTHER" id="PTHR19271">
    <property type="entry name" value="CYTOCHROME B"/>
    <property type="match status" value="1"/>
</dbReference>
<dbReference type="PANTHER" id="PTHR19271:SF16">
    <property type="entry name" value="CYTOCHROME B"/>
    <property type="match status" value="1"/>
</dbReference>
<dbReference type="Pfam" id="PF00032">
    <property type="entry name" value="Cytochrom_B_C"/>
    <property type="match status" value="1"/>
</dbReference>
<dbReference type="Pfam" id="PF00033">
    <property type="entry name" value="Cytochrome_B"/>
    <property type="match status" value="1"/>
</dbReference>
<dbReference type="PIRSF" id="PIRSF038885">
    <property type="entry name" value="COB"/>
    <property type="match status" value="1"/>
</dbReference>
<dbReference type="SUPFAM" id="SSF81648">
    <property type="entry name" value="a domain/subunit of cytochrome bc1 complex (Ubiquinol-cytochrome c reductase)"/>
    <property type="match status" value="1"/>
</dbReference>
<dbReference type="SUPFAM" id="SSF81342">
    <property type="entry name" value="Transmembrane di-heme cytochromes"/>
    <property type="match status" value="1"/>
</dbReference>
<dbReference type="PROSITE" id="PS51003">
    <property type="entry name" value="CYTB_CTER"/>
    <property type="match status" value="1"/>
</dbReference>
<dbReference type="PROSITE" id="PS51002">
    <property type="entry name" value="CYTB_NTER"/>
    <property type="match status" value="1"/>
</dbReference>
<protein>
    <recommendedName>
        <fullName>Cytochrome b</fullName>
    </recommendedName>
    <alternativeName>
        <fullName>Complex III subunit 3</fullName>
    </alternativeName>
    <alternativeName>
        <fullName>Complex III subunit III</fullName>
    </alternativeName>
    <alternativeName>
        <fullName>Cytochrome b-c1 complex subunit 3</fullName>
    </alternativeName>
    <alternativeName>
        <fullName>Ubiquinol-cytochrome-c reductase complex cytochrome b subunit</fullName>
    </alternativeName>
</protein>
<reference key="1">
    <citation type="journal article" date="2003" name="J. Mammal. Evol.">
        <title>Phylogeny and evolutionary history of the ground squirrels (Rodentia: Marmotinae).</title>
        <authorList>
            <person name="Harrison R.G."/>
            <person name="Bogdanowicz S.M."/>
            <person name="Hoffmann R.S."/>
            <person name="Yensen E."/>
            <person name="Sherman P.W."/>
        </authorList>
    </citation>
    <scope>NUCLEOTIDE SEQUENCE [GENOMIC DNA]</scope>
</reference>
<proteinExistence type="inferred from homology"/>
<accession>Q9TF45</accession>
<accession>Q9TF40</accession>
<gene>
    <name type="primary">MT-CYB</name>
    <name type="synonym">COB</name>
    <name type="synonym">CYTB</name>
    <name type="synonym">MTCYB</name>
</gene>
<comment type="function">
    <text evidence="2">Component of the ubiquinol-cytochrome c reductase complex (complex III or cytochrome b-c1 complex) that is part of the mitochondrial respiratory chain. The b-c1 complex mediates electron transfer from ubiquinol to cytochrome c. Contributes to the generation of a proton gradient across the mitochondrial membrane that is then used for ATP synthesis.</text>
</comment>
<comment type="cofactor">
    <cofactor evidence="2">
        <name>heme b</name>
        <dbReference type="ChEBI" id="CHEBI:60344"/>
    </cofactor>
    <text evidence="2">Binds 2 heme b groups non-covalently.</text>
</comment>
<comment type="subunit">
    <text evidence="2">The cytochrome bc1 complex contains 11 subunits: 3 respiratory subunits (MT-CYB, CYC1 and UQCRFS1), 2 core proteins (UQCRC1 and UQCRC2) and 6 low-molecular weight proteins (UQCRH/QCR6, UQCRB/QCR7, UQCRQ/QCR8, UQCR10/QCR9, UQCR11/QCR10 and a cleavage product of UQCRFS1). This cytochrome bc1 complex then forms a dimer.</text>
</comment>
<comment type="subcellular location">
    <subcellularLocation>
        <location evidence="2">Mitochondrion inner membrane</location>
        <topology evidence="2">Multi-pass membrane protein</topology>
    </subcellularLocation>
</comment>
<comment type="miscellaneous">
    <text evidence="1">Heme 1 (or BL or b562) is low-potential and absorbs at about 562 nm, and heme 2 (or BH or b566) is high-potential and absorbs at about 566 nm.</text>
</comment>
<comment type="similarity">
    <text evidence="3 4">Belongs to the cytochrome b family.</text>
</comment>
<comment type="caution">
    <text evidence="2">The full-length protein contains only eight transmembrane helices, not nine as predicted by bioinformatics tools.</text>
</comment>
<geneLocation type="mitochondrion"/>
<name>CYB_SPEFU</name>
<organism>
    <name type="scientific">Spermophilus fulvus</name>
    <name type="common">Yellow ground squirrel</name>
    <dbReference type="NCBI Taxonomy" id="99841"/>
    <lineage>
        <taxon>Eukaryota</taxon>
        <taxon>Metazoa</taxon>
        <taxon>Chordata</taxon>
        <taxon>Craniata</taxon>
        <taxon>Vertebrata</taxon>
        <taxon>Euteleostomi</taxon>
        <taxon>Mammalia</taxon>
        <taxon>Eutheria</taxon>
        <taxon>Euarchontoglires</taxon>
        <taxon>Glires</taxon>
        <taxon>Rodentia</taxon>
        <taxon>Sciuromorpha</taxon>
        <taxon>Sciuridae</taxon>
        <taxon>Xerinae</taxon>
        <taxon>Marmotini</taxon>
        <taxon>Spermophilus</taxon>
    </lineage>
</organism>